<keyword id="KW-1185">Reference proteome</keyword>
<keyword id="KW-0687">Ribonucleoprotein</keyword>
<keyword id="KW-0689">Ribosomal protein</keyword>
<keyword id="KW-0694">RNA-binding</keyword>
<keyword id="KW-0699">rRNA-binding</keyword>
<proteinExistence type="inferred from homology"/>
<protein>
    <recommendedName>
        <fullName evidence="1">Large ribosomal subunit protein bL20</fullName>
    </recommendedName>
    <alternativeName>
        <fullName evidence="2">50S ribosomal protein L20</fullName>
    </alternativeName>
</protein>
<comment type="function">
    <text evidence="1">Binds directly to 23S ribosomal RNA and is necessary for the in vitro assembly process of the 50S ribosomal subunit. It is not involved in the protein synthesizing functions of that subunit.</text>
</comment>
<comment type="similarity">
    <text evidence="1">Belongs to the bacterial ribosomal protein bL20 family.</text>
</comment>
<reference key="1">
    <citation type="journal article" date="2007" name="PLoS Genet.">
        <title>Being pathogenic, plastic, and sexual while living with a nearly minimal bacterial genome.</title>
        <authorList>
            <person name="Sirand-Pugnet P."/>
            <person name="Lartigue C."/>
            <person name="Marenda M."/>
            <person name="Jacob D."/>
            <person name="Barre A."/>
            <person name="Barbe V."/>
            <person name="Schenowitz C."/>
            <person name="Mangenot S."/>
            <person name="Couloux A."/>
            <person name="Segurens B."/>
            <person name="de Daruvar A."/>
            <person name="Blanchard A."/>
            <person name="Citti C."/>
        </authorList>
    </citation>
    <scope>NUCLEOTIDE SEQUENCE [LARGE SCALE GENOMIC DNA]</scope>
    <source>
        <strain>NCTC 10123 / CIP 59.7 / PG2</strain>
    </source>
</reference>
<feature type="chain" id="PRO_1000122342" description="Large ribosomal subunit protein bL20">
    <location>
        <begin position="1"/>
        <end position="116"/>
    </location>
</feature>
<name>RL20_MYCAP</name>
<dbReference type="EMBL" id="CU179680">
    <property type="protein sequence ID" value="CAL59175.1"/>
    <property type="molecule type" value="Genomic_DNA"/>
</dbReference>
<dbReference type="RefSeq" id="WP_004023890.1">
    <property type="nucleotide sequence ID" value="NC_009497.1"/>
</dbReference>
<dbReference type="SMR" id="A5IYR6"/>
<dbReference type="STRING" id="347257.MAG4770"/>
<dbReference type="GeneID" id="93358219"/>
<dbReference type="KEGG" id="maa:MAG4770"/>
<dbReference type="HOGENOM" id="CLU_123265_0_1_14"/>
<dbReference type="Proteomes" id="UP000007065">
    <property type="component" value="Chromosome"/>
</dbReference>
<dbReference type="GO" id="GO:1990904">
    <property type="term" value="C:ribonucleoprotein complex"/>
    <property type="evidence" value="ECO:0007669"/>
    <property type="project" value="UniProtKB-KW"/>
</dbReference>
<dbReference type="GO" id="GO:0005840">
    <property type="term" value="C:ribosome"/>
    <property type="evidence" value="ECO:0007669"/>
    <property type="project" value="UniProtKB-KW"/>
</dbReference>
<dbReference type="GO" id="GO:0019843">
    <property type="term" value="F:rRNA binding"/>
    <property type="evidence" value="ECO:0007669"/>
    <property type="project" value="UniProtKB-UniRule"/>
</dbReference>
<dbReference type="GO" id="GO:0003735">
    <property type="term" value="F:structural constituent of ribosome"/>
    <property type="evidence" value="ECO:0007669"/>
    <property type="project" value="InterPro"/>
</dbReference>
<dbReference type="GO" id="GO:0000027">
    <property type="term" value="P:ribosomal large subunit assembly"/>
    <property type="evidence" value="ECO:0007669"/>
    <property type="project" value="UniProtKB-UniRule"/>
</dbReference>
<dbReference type="GO" id="GO:0006412">
    <property type="term" value="P:translation"/>
    <property type="evidence" value="ECO:0007669"/>
    <property type="project" value="InterPro"/>
</dbReference>
<dbReference type="CDD" id="cd07026">
    <property type="entry name" value="Ribosomal_L20"/>
    <property type="match status" value="1"/>
</dbReference>
<dbReference type="FunFam" id="1.10.1900.20:FF:000001">
    <property type="entry name" value="50S ribosomal protein L20"/>
    <property type="match status" value="1"/>
</dbReference>
<dbReference type="Gene3D" id="6.10.160.10">
    <property type="match status" value="1"/>
</dbReference>
<dbReference type="Gene3D" id="1.10.1900.20">
    <property type="entry name" value="Ribosomal protein L20"/>
    <property type="match status" value="1"/>
</dbReference>
<dbReference type="HAMAP" id="MF_00382">
    <property type="entry name" value="Ribosomal_bL20"/>
    <property type="match status" value="1"/>
</dbReference>
<dbReference type="InterPro" id="IPR005813">
    <property type="entry name" value="Ribosomal_bL20"/>
</dbReference>
<dbReference type="InterPro" id="IPR049946">
    <property type="entry name" value="RIBOSOMAL_L20_CS"/>
</dbReference>
<dbReference type="InterPro" id="IPR035566">
    <property type="entry name" value="Ribosomal_protein_bL20_C"/>
</dbReference>
<dbReference type="NCBIfam" id="TIGR01032">
    <property type="entry name" value="rplT_bact"/>
    <property type="match status" value="1"/>
</dbReference>
<dbReference type="PANTHER" id="PTHR10986">
    <property type="entry name" value="39S RIBOSOMAL PROTEIN L20"/>
    <property type="match status" value="1"/>
</dbReference>
<dbReference type="Pfam" id="PF00453">
    <property type="entry name" value="Ribosomal_L20"/>
    <property type="match status" value="1"/>
</dbReference>
<dbReference type="PRINTS" id="PR00062">
    <property type="entry name" value="RIBOSOMALL20"/>
</dbReference>
<dbReference type="SUPFAM" id="SSF74731">
    <property type="entry name" value="Ribosomal protein L20"/>
    <property type="match status" value="1"/>
</dbReference>
<dbReference type="PROSITE" id="PS00937">
    <property type="entry name" value="RIBOSOMAL_L20"/>
    <property type="match status" value="1"/>
</dbReference>
<sequence length="116" mass="13449">MRVKGGTVTRARRKKWIKLAKGYFGHKSIGYKVAKQAVVKSWTYAFRDRKQVKRDYRKLWISRISAAVRLEGLSYSKFINGLKKSNITINRKMLSELAINEPQVFSQLIAIARDSE</sequence>
<organism>
    <name type="scientific">Mycoplasmopsis agalactiae (strain NCTC 10123 / CIP 59.7 / PG2)</name>
    <name type="common">Mycoplasma agalactiae</name>
    <dbReference type="NCBI Taxonomy" id="347257"/>
    <lineage>
        <taxon>Bacteria</taxon>
        <taxon>Bacillati</taxon>
        <taxon>Mycoplasmatota</taxon>
        <taxon>Mycoplasmoidales</taxon>
        <taxon>Metamycoplasmataceae</taxon>
        <taxon>Mycoplasmopsis</taxon>
    </lineage>
</organism>
<gene>
    <name evidence="1" type="primary">rplT</name>
    <name type="ordered locus">MAG4770</name>
</gene>
<accession>A5IYR6</accession>
<evidence type="ECO:0000255" key="1">
    <source>
        <dbReference type="HAMAP-Rule" id="MF_00382"/>
    </source>
</evidence>
<evidence type="ECO:0000305" key="2"/>